<dbReference type="EMBL" id="CR954253">
    <property type="protein sequence ID" value="CAI97572.1"/>
    <property type="molecule type" value="Genomic_DNA"/>
</dbReference>
<dbReference type="RefSeq" id="WP_011543778.1">
    <property type="nucleotide sequence ID" value="NC_008054.1"/>
</dbReference>
<dbReference type="SMR" id="Q1GAT1"/>
<dbReference type="STRING" id="390333.Ldb0745"/>
<dbReference type="KEGG" id="ldb:Ldb0745"/>
<dbReference type="PATRIC" id="fig|390333.13.peg.54"/>
<dbReference type="eggNOG" id="COG1799">
    <property type="taxonomic scope" value="Bacteria"/>
</dbReference>
<dbReference type="HOGENOM" id="CLU_078499_4_1_9"/>
<dbReference type="BioCyc" id="LDEL390333:LDB_RS03270-MONOMER"/>
<dbReference type="Proteomes" id="UP000001259">
    <property type="component" value="Chromosome"/>
</dbReference>
<dbReference type="GO" id="GO:0005737">
    <property type="term" value="C:cytoplasm"/>
    <property type="evidence" value="ECO:0007669"/>
    <property type="project" value="UniProtKB-SubCell"/>
</dbReference>
<dbReference type="GO" id="GO:0000917">
    <property type="term" value="P:division septum assembly"/>
    <property type="evidence" value="ECO:0007669"/>
    <property type="project" value="UniProtKB-KW"/>
</dbReference>
<dbReference type="GO" id="GO:0043093">
    <property type="term" value="P:FtsZ-dependent cytokinesis"/>
    <property type="evidence" value="ECO:0007669"/>
    <property type="project" value="UniProtKB-UniRule"/>
</dbReference>
<dbReference type="Gene3D" id="3.30.110.150">
    <property type="entry name" value="SepF-like protein"/>
    <property type="match status" value="1"/>
</dbReference>
<dbReference type="HAMAP" id="MF_01197">
    <property type="entry name" value="SepF"/>
    <property type="match status" value="1"/>
</dbReference>
<dbReference type="InterPro" id="IPR023052">
    <property type="entry name" value="Cell_div_SepF"/>
</dbReference>
<dbReference type="InterPro" id="IPR007561">
    <property type="entry name" value="Cell_div_SepF/SepF-rel"/>
</dbReference>
<dbReference type="InterPro" id="IPR038594">
    <property type="entry name" value="SepF-like_sf"/>
</dbReference>
<dbReference type="PANTHER" id="PTHR35798">
    <property type="entry name" value="CELL DIVISION PROTEIN SEPF"/>
    <property type="match status" value="1"/>
</dbReference>
<dbReference type="PANTHER" id="PTHR35798:SF1">
    <property type="entry name" value="CELL DIVISION PROTEIN SEPF"/>
    <property type="match status" value="1"/>
</dbReference>
<dbReference type="Pfam" id="PF04472">
    <property type="entry name" value="SepF"/>
    <property type="match status" value="1"/>
</dbReference>
<reference key="1">
    <citation type="journal article" date="2006" name="Proc. Natl. Acad. Sci. U.S.A.">
        <title>The complete genome sequence of Lactobacillus bulgaricus reveals extensive and ongoing reductive evolution.</title>
        <authorList>
            <person name="van de Guchte M."/>
            <person name="Penaud S."/>
            <person name="Grimaldi C."/>
            <person name="Barbe V."/>
            <person name="Bryson K."/>
            <person name="Nicolas P."/>
            <person name="Robert C."/>
            <person name="Oztas S."/>
            <person name="Mangenot S."/>
            <person name="Couloux A."/>
            <person name="Loux V."/>
            <person name="Dervyn R."/>
            <person name="Bossy R."/>
            <person name="Bolotin A."/>
            <person name="Batto J.-M."/>
            <person name="Walunas T."/>
            <person name="Gibrat J.-F."/>
            <person name="Bessieres P."/>
            <person name="Weissenbach J."/>
            <person name="Ehrlich S.D."/>
            <person name="Maguin E."/>
        </authorList>
    </citation>
    <scope>NUCLEOTIDE SEQUENCE [LARGE SCALE GENOMIC DNA]</scope>
    <source>
        <strain>ATCC 11842 / DSM 20081 / BCRC 10696 / JCM 1002 / NBRC 13953 / NCIMB 11778 / NCTC 12712 / WDCM 00102 / Lb 14</strain>
    </source>
</reference>
<gene>
    <name evidence="1" type="primary">sepF</name>
    <name type="ordered locus">Ldb0745</name>
</gene>
<organism>
    <name type="scientific">Lactobacillus delbrueckii subsp. bulgaricus (strain ATCC 11842 / DSM 20081 / BCRC 10696 / JCM 1002 / NBRC 13953 / NCIMB 11778 / NCTC 12712 / WDCM 00102 / Lb 14)</name>
    <dbReference type="NCBI Taxonomy" id="390333"/>
    <lineage>
        <taxon>Bacteria</taxon>
        <taxon>Bacillati</taxon>
        <taxon>Bacillota</taxon>
        <taxon>Bacilli</taxon>
        <taxon>Lactobacillales</taxon>
        <taxon>Lactobacillaceae</taxon>
        <taxon>Lactobacillus</taxon>
    </lineage>
</organism>
<name>SEPF_LACDA</name>
<proteinExistence type="inferred from homology"/>
<accession>Q1GAT1</accession>
<sequence length="138" mass="15639">MNNKFKDFFGFGDNDSYEERDAYEEHYDEQEEMQNSNRPTNSRDSNVVSIKAGQAGSGPSKIVLYEPRVYSDAKEVAQNLLNQRAIIINFSRMDDASARRVVDFITGTVYALNGEIQRIGDKIFLATPPKFETDGKIT</sequence>
<keyword id="KW-0131">Cell cycle</keyword>
<keyword id="KW-0132">Cell division</keyword>
<keyword id="KW-0963">Cytoplasm</keyword>
<keyword id="KW-1185">Reference proteome</keyword>
<keyword id="KW-0717">Septation</keyword>
<feature type="chain" id="PRO_0000334018" description="Cell division protein SepF">
    <location>
        <begin position="1"/>
        <end position="138"/>
    </location>
</feature>
<feature type="region of interest" description="Disordered" evidence="2">
    <location>
        <begin position="1"/>
        <end position="59"/>
    </location>
</feature>
<feature type="compositionally biased region" description="Polar residues" evidence="2">
    <location>
        <begin position="33"/>
        <end position="48"/>
    </location>
</feature>
<comment type="function">
    <text evidence="1">Cell division protein that is part of the divisome complex and is recruited early to the Z-ring. Probably stimulates Z-ring formation, perhaps through the cross-linking of FtsZ protofilaments. Its function overlaps with FtsA.</text>
</comment>
<comment type="subunit">
    <text evidence="1">Homodimer. Interacts with FtsZ.</text>
</comment>
<comment type="subcellular location">
    <subcellularLocation>
        <location evidence="1">Cytoplasm</location>
    </subcellularLocation>
    <text evidence="1">Localizes to the division site, in a FtsZ-dependent manner.</text>
</comment>
<comment type="similarity">
    <text evidence="1">Belongs to the SepF family.</text>
</comment>
<evidence type="ECO:0000255" key="1">
    <source>
        <dbReference type="HAMAP-Rule" id="MF_01197"/>
    </source>
</evidence>
<evidence type="ECO:0000256" key="2">
    <source>
        <dbReference type="SAM" id="MobiDB-lite"/>
    </source>
</evidence>
<protein>
    <recommendedName>
        <fullName evidence="1">Cell division protein SepF</fullName>
    </recommendedName>
</protein>